<reference key="1">
    <citation type="journal article" date="2006" name="Nat. Genet.">
        <title>The multidrug-resistant human pathogen Clostridium difficile has a highly mobile, mosaic genome.</title>
        <authorList>
            <person name="Sebaihia M."/>
            <person name="Wren B.W."/>
            <person name="Mullany P."/>
            <person name="Fairweather N.F."/>
            <person name="Minton N."/>
            <person name="Stabler R."/>
            <person name="Thomson N.R."/>
            <person name="Roberts A.P."/>
            <person name="Cerdeno-Tarraga A.M."/>
            <person name="Wang H."/>
            <person name="Holden M.T.G."/>
            <person name="Wright A."/>
            <person name="Churcher C."/>
            <person name="Quail M.A."/>
            <person name="Baker S."/>
            <person name="Bason N."/>
            <person name="Brooks K."/>
            <person name="Chillingworth T."/>
            <person name="Cronin A."/>
            <person name="Davis P."/>
            <person name="Dowd L."/>
            <person name="Fraser A."/>
            <person name="Feltwell T."/>
            <person name="Hance Z."/>
            <person name="Holroyd S."/>
            <person name="Jagels K."/>
            <person name="Moule S."/>
            <person name="Mungall K."/>
            <person name="Price C."/>
            <person name="Rabbinowitsch E."/>
            <person name="Sharp S."/>
            <person name="Simmonds M."/>
            <person name="Stevens K."/>
            <person name="Unwin L."/>
            <person name="Whithead S."/>
            <person name="Dupuy B."/>
            <person name="Dougan G."/>
            <person name="Barrell B."/>
            <person name="Parkhill J."/>
        </authorList>
    </citation>
    <scope>NUCLEOTIDE SEQUENCE [LARGE SCALE GENOMIC DNA]</scope>
    <source>
        <strain>630</strain>
    </source>
</reference>
<feature type="chain" id="PRO_1000059153" description="V-type ATP synthase subunit D">
    <location>
        <begin position="1"/>
        <end position="222"/>
    </location>
</feature>
<keyword id="KW-0066">ATP synthesis</keyword>
<keyword id="KW-0375">Hydrogen ion transport</keyword>
<keyword id="KW-0406">Ion transport</keyword>
<keyword id="KW-1185">Reference proteome</keyword>
<keyword id="KW-0813">Transport</keyword>
<dbReference type="EMBL" id="AM180355">
    <property type="protein sequence ID" value="CAJ69846.1"/>
    <property type="molecule type" value="Genomic_DNA"/>
</dbReference>
<dbReference type="RefSeq" id="WP_009891221.1">
    <property type="nucleotide sequence ID" value="NZ_JAUPES010000017.1"/>
</dbReference>
<dbReference type="RefSeq" id="YP_001089470.1">
    <property type="nucleotide sequence ID" value="NC_009089.1"/>
</dbReference>
<dbReference type="SMR" id="Q184E4"/>
<dbReference type="STRING" id="272563.CD630_29540"/>
<dbReference type="EnsemblBacteria" id="CAJ69846">
    <property type="protein sequence ID" value="CAJ69846"/>
    <property type="gene ID" value="CD630_29540"/>
</dbReference>
<dbReference type="KEGG" id="cdf:CD630_29540"/>
<dbReference type="KEGG" id="pdc:CDIF630_03237"/>
<dbReference type="PATRIC" id="fig|272563.120.peg.3120"/>
<dbReference type="eggNOG" id="COG1394">
    <property type="taxonomic scope" value="Bacteria"/>
</dbReference>
<dbReference type="OrthoDB" id="9781718at2"/>
<dbReference type="PhylomeDB" id="Q184E4"/>
<dbReference type="BioCyc" id="PDIF272563:G12WB-3118-MONOMER"/>
<dbReference type="Proteomes" id="UP000001978">
    <property type="component" value="Chromosome"/>
</dbReference>
<dbReference type="GO" id="GO:0005524">
    <property type="term" value="F:ATP binding"/>
    <property type="evidence" value="ECO:0007669"/>
    <property type="project" value="UniProtKB-UniRule"/>
</dbReference>
<dbReference type="GO" id="GO:0046933">
    <property type="term" value="F:proton-transporting ATP synthase activity, rotational mechanism"/>
    <property type="evidence" value="ECO:0007669"/>
    <property type="project" value="UniProtKB-UniRule"/>
</dbReference>
<dbReference type="GO" id="GO:0046961">
    <property type="term" value="F:proton-transporting ATPase activity, rotational mechanism"/>
    <property type="evidence" value="ECO:0007669"/>
    <property type="project" value="InterPro"/>
</dbReference>
<dbReference type="GO" id="GO:0042777">
    <property type="term" value="P:proton motive force-driven plasma membrane ATP synthesis"/>
    <property type="evidence" value="ECO:0007669"/>
    <property type="project" value="UniProtKB-UniRule"/>
</dbReference>
<dbReference type="FunFam" id="1.10.287.3240:FF:000007">
    <property type="entry name" value="V-type ATP synthase subunit D"/>
    <property type="match status" value="1"/>
</dbReference>
<dbReference type="Gene3D" id="1.10.287.3240">
    <property type="match status" value="1"/>
</dbReference>
<dbReference type="HAMAP" id="MF_00271">
    <property type="entry name" value="ATP_synth_D_arch"/>
    <property type="match status" value="1"/>
</dbReference>
<dbReference type="InterPro" id="IPR002699">
    <property type="entry name" value="V_ATPase_D"/>
</dbReference>
<dbReference type="NCBIfam" id="NF001543">
    <property type="entry name" value="PRK00373.1-2"/>
    <property type="match status" value="1"/>
</dbReference>
<dbReference type="NCBIfam" id="TIGR00309">
    <property type="entry name" value="V_ATPase_subD"/>
    <property type="match status" value="1"/>
</dbReference>
<dbReference type="PANTHER" id="PTHR11671">
    <property type="entry name" value="V-TYPE ATP SYNTHASE SUBUNIT D"/>
    <property type="match status" value="1"/>
</dbReference>
<dbReference type="Pfam" id="PF01813">
    <property type="entry name" value="ATP-synt_D"/>
    <property type="match status" value="1"/>
</dbReference>
<comment type="function">
    <text evidence="1">Produces ATP from ADP in the presence of a proton gradient across the membrane.</text>
</comment>
<comment type="similarity">
    <text evidence="1">Belongs to the V-ATPase D subunit family.</text>
</comment>
<evidence type="ECO:0000255" key="1">
    <source>
        <dbReference type="HAMAP-Rule" id="MF_00271"/>
    </source>
</evidence>
<proteinExistence type="inferred from homology"/>
<protein>
    <recommendedName>
        <fullName evidence="1">V-type ATP synthase subunit D</fullName>
    </recommendedName>
    <alternativeName>
        <fullName evidence="1">V-ATPase subunit D</fullName>
    </alternativeName>
</protein>
<accession>Q184E4</accession>
<organism>
    <name type="scientific">Clostridioides difficile (strain 630)</name>
    <name type="common">Peptoclostridium difficile</name>
    <dbReference type="NCBI Taxonomy" id="272563"/>
    <lineage>
        <taxon>Bacteria</taxon>
        <taxon>Bacillati</taxon>
        <taxon>Bacillota</taxon>
        <taxon>Clostridia</taxon>
        <taxon>Peptostreptococcales</taxon>
        <taxon>Peptostreptococcaceae</taxon>
        <taxon>Clostridioides</taxon>
    </lineage>
</organism>
<name>VATD_CLOD6</name>
<gene>
    <name evidence="1" type="primary">atpD</name>
    <name type="ordered locus">CD630_29540</name>
</gene>
<sequence>MARLNINPTRMEMTRLKKLLKTATRGHKLLKDKLDELMKQFLEIVRENKRLREEAENALDTAYKNFIIARAVMSQEYLGSALMMPKQSVSVDVSTRNIMSVDVPVFDFKTENNQSDIYPYGLAFTSGELDSAMEAFSDAMQPLLRLAESEKSAQLLAQEIEKTRRRVNALENVMIPNYIETIKYIAMKLEENERASTTRLMKVKDMVLKKALEEKKKNDLVV</sequence>